<organism>
    <name type="scientific">Leptotrichia wadei (strain F0279)</name>
    <dbReference type="NCBI Taxonomy" id="888055"/>
    <lineage>
        <taxon>Bacteria</taxon>
        <taxon>Fusobacteriati</taxon>
        <taxon>Fusobacteriota</taxon>
        <taxon>Fusobacteriia</taxon>
        <taxon>Fusobacteriales</taxon>
        <taxon>Leptotrichiaceae</taxon>
        <taxon>Leptotrichia</taxon>
    </lineage>
</organism>
<comment type="function">
    <text evidence="4">CRISPR (clustered regularly interspaced short palindromic repeat), is an adaptive immune system that provides protection against mobile genetic elements (viruses, transposable elements and conjugative plasmids). CRISPR clusters contain sequences complementary to antecedent mobile elements and target invading nucleic acids. Unlike many single-component effectors, this CRISPR-Cas system targets RNA (PubMed:28475872). CRISPR clusters are transcribed from pre-CRISPR RNA (crRNA) and processed into crRNA by this protein (PubMed:28475872). Cleaves linear target ssRNA in a pre-crRNA-dependent fashion, preferentially before U residues (PubMed:28475872). Binding a viable target RNA target activates this protein for non-specific RNA degradation in vitro (called collateral RNA degradation), which is fairly sensitive as it requires picomolar levels of viable target RNA (PubMed:28408723, PubMed:28475872).</text>
</comment>
<comment type="cofactor">
    <cofactor evidence="1">
        <name>a divalent metal cation</name>
        <dbReference type="ChEBI" id="CHEBI:60240"/>
    </cofactor>
    <text evidence="1">Pre-crRNA processing is metal independent, while crRNA-guided target RNA cleavage is dependent on divalent metal.</text>
</comment>
<comment type="activity regulation">
    <text evidence="3 4">Target RNA acts as an activator for non-specific ssRNA degradation (PubMed:28408723, PubMed:28475872).</text>
</comment>
<comment type="domain">
    <text evidence="1">The target ssRNase active sites are probably within the 2 HEPN-like folds, and the 2 folds interact in vivo.</text>
</comment>
<comment type="biotechnology">
    <text evidence="3">Can be used to detect RNA or DNA with atomolar sensitivity and single-base mismatch specificity when combined with isothermal amplification, allowing detection of virus, bacterial pathogens, to genotype DNA and to identify mutations in cell-free DNA. Additionally the reagents can be lyophilized and reconstituted on paper for field work (PubMed:28408723).</text>
</comment>
<comment type="miscellaneous">
    <text evidence="7">Part of a type VI-A uridine-preferring CRISPR-Cas system.</text>
</comment>
<comment type="similarity">
    <text evidence="6">Belongs to the CRISPR-associated endoribonuclease Cas13a family.</text>
</comment>
<name>CS13A_LEPWF</name>
<proteinExistence type="evidence at protein level"/>
<reference key="1">
    <citation type="submission" date="2013-06" db="EMBL/GenBank/DDBJ databases">
        <authorList>
            <person name="Weinstock G."/>
            <person name="Sodergren E."/>
            <person name="Lobos E.A."/>
            <person name="Fulton L."/>
            <person name="Fulton R."/>
            <person name="Courtney L."/>
            <person name="Fronick C."/>
            <person name="O'Laughlin M."/>
            <person name="Godfrey J."/>
            <person name="Wilson R.M."/>
            <person name="Miner T."/>
            <person name="Farmer C."/>
            <person name="Delehaunty K."/>
            <person name="Cordes M."/>
            <person name="Minx P."/>
            <person name="Tomlinson C."/>
            <person name="Chen J."/>
            <person name="Wollam A."/>
            <person name="Pepin K.H."/>
            <person name="Bhonagiri V."/>
            <person name="Zhang X."/>
            <person name="Warren W."/>
            <person name="Mitreva M."/>
            <person name="Mardis E.R."/>
            <person name="Wilson R.K."/>
        </authorList>
    </citation>
    <scope>NUCLEOTIDE SEQUENCE [LARGE SCALE GENOMIC DNA]</scope>
    <source>
        <strain>F0279</strain>
    </source>
</reference>
<reference key="2">
    <citation type="journal article" date="2017" name="Mol. Cell">
        <title>RNA targeting by functionally orthogonal type VI-A CRISPR-Cas enzymes.</title>
        <authorList>
            <person name="East-Seletsky A."/>
            <person name="O'Connell M.R."/>
            <person name="Burstein D."/>
            <person name="Knott G.J."/>
            <person name="Doudna J.A."/>
        </authorList>
    </citation>
    <scope>FUNCTION IN CRRNA PROCESSING</scope>
    <scope>FUNCTION IN TARGET SSRNA CLEAVAGE</scope>
    <scope>FUNCTION AS AN ENDORIBONUCLEASE</scope>
    <scope>ACTIVITY REGULATION</scope>
</reference>
<reference key="3">
    <citation type="journal article" date="2017" name="Science">
        <title>Nucleic acid detection with CRISPR-Cas13a/C2c2.</title>
        <authorList>
            <person name="Gootenberg J.S."/>
            <person name="Abudayyeh O.O."/>
            <person name="Lee J.W."/>
            <person name="Essletzbichler P."/>
            <person name="Dy A.J."/>
            <person name="Joung J."/>
            <person name="Verdine V."/>
            <person name="Donghia N."/>
            <person name="Daringer N.M."/>
            <person name="Freije C.A."/>
            <person name="Myhrvold C."/>
            <person name="Bhattacharyya R.P."/>
            <person name="Livny J."/>
            <person name="Regev A."/>
            <person name="Koonin E.V."/>
            <person name="Hung D.T."/>
            <person name="Sabeti P.C."/>
            <person name="Collins J.J."/>
            <person name="Zhang F."/>
        </authorList>
    </citation>
    <scope>FUNCTION IN TARGET SSRNA CLEAVAGE</scope>
    <scope>FUNCTION AS AN ENDORIBONUCLEASE</scope>
    <scope>ACTIVITY REGULATION</scope>
    <scope>BIOTECHNOLOGY</scope>
</reference>
<protein>
    <recommendedName>
        <fullName evidence="5">CRISPR-associated endoribonuclease Cas13a</fullName>
        <shortName>EndoRNase</shortName>
        <ecNumber>3.1.-.-</ecNumber>
    </recommendedName>
    <alternativeName>
        <fullName evidence="5">LwaCas13a</fullName>
    </alternativeName>
</protein>
<feature type="chain" id="PRO_0000442269" description="CRISPR-associated endoribonuclease Cas13a">
    <location>
        <begin position="1"/>
        <end position="1182"/>
    </location>
</feature>
<feature type="region of interest" description="HEPN-like fold 1" evidence="1">
    <location>
        <begin position="366"/>
        <end position="508"/>
    </location>
</feature>
<feature type="region of interest" description="HEPN-like fold 2" evidence="1">
    <location>
        <begin position="965"/>
        <end position="1120"/>
    </location>
</feature>
<feature type="coiled-coil region" evidence="2">
    <location>
        <begin position="132"/>
        <end position="279"/>
    </location>
</feature>
<feature type="coiled-coil region" evidence="2">
    <location>
        <begin position="896"/>
        <end position="955"/>
    </location>
</feature>
<gene>
    <name evidence="5" type="primary">cas13a</name>
    <name type="ORF">HMPREF9015_00520</name>
</gene>
<dbReference type="EC" id="3.1.-.-"/>
<dbReference type="EMBL" id="AWVM01000026">
    <property type="protein sequence ID" value="ERK53440.1"/>
    <property type="molecule type" value="Genomic_DNA"/>
</dbReference>
<dbReference type="RefSeq" id="WP_021746003.1">
    <property type="nucleotide sequence ID" value="NZ_KI271395.1"/>
</dbReference>
<dbReference type="SMR" id="U2PSH1"/>
<dbReference type="PATRIC" id="fig|888055.3.peg.499"/>
<dbReference type="HOGENOM" id="CLU_008486_0_0_0"/>
<dbReference type="Proteomes" id="UP000016626">
    <property type="component" value="Unassembled WGS sequence"/>
</dbReference>
<dbReference type="GO" id="GO:0004519">
    <property type="term" value="F:endonuclease activity"/>
    <property type="evidence" value="ECO:0007669"/>
    <property type="project" value="UniProtKB-KW"/>
</dbReference>
<dbReference type="GO" id="GO:0003723">
    <property type="term" value="F:RNA binding"/>
    <property type="evidence" value="ECO:0007669"/>
    <property type="project" value="UniProtKB-KW"/>
</dbReference>
<dbReference type="GO" id="GO:0051607">
    <property type="term" value="P:defense response to virus"/>
    <property type="evidence" value="ECO:0007669"/>
    <property type="project" value="UniProtKB-KW"/>
</dbReference>
<dbReference type="InterPro" id="IPR053395">
    <property type="entry name" value="Cas13a_endoribonuclease"/>
</dbReference>
<dbReference type="NCBIfam" id="NF038188">
    <property type="entry name" value="cas13A_C2c2"/>
    <property type="match status" value="1"/>
</dbReference>
<sequence>MYMKITKIDGVSHYKKQDKGILKKKWKDLDERKQREKIEARYNKQIESKIYKEFFRLKNKKRIEKEEDQNIKSLYFFIKELYLNEKNEEWELKNINLEILDDKERVIKGYKFKEDVYFFKEGYKEYYLRILFNNLIEKVQNENREKVRKNKEFLDLKEIFKKYKNRKIDLLLKSINNNKINLEYKKENVNEEIYGINPTNDREMTFYELLKEIIEKKDEQKSILEEKLDNFDITNFLENIEKIFNEETEINIIKGKVLNELREYIKEKEENNSDNKLKQIYNLELKKYIENNFSYKKQKSKSKNGKNDYLYLNFLKKIMFIEEVDEKKEINKEKFKNKINSNFKNLFVQHILDYGKLLYYKENDEYIKNTGQLETKDLEYIKTKETLIRKMAVLVSFAANSYYNLFGRVSGDILGTEVVKSSKTNVIKVGSHIFKEKMLNYFFDFEIFDANKIVEILESISYSIYNVRNGVGHFNKLILGKYKKKDINTNKRIEEDLNNNEEIKGYFIKKRGEIERKVKEKFLSNNLQYYYSKEKIENYFEVYEFEILKRKIPFAPNFKRIIKKGEDLFNNKNNKKYEYFKNFDKNSAEEKKEFLKTRNFLLKELYYNNFYKEFLSKKEEFEKIVLEVKEEKKSRGNINNKKSGVSFQSIDDYDTKINISDYIASIHKKEMERVEKYNEEKQKDTAKYIRDFVEEIFLTGFINYLEKDKRLHFLKEEFSILCNNNNNVVDFNININEEKIKEFLKENDSKTLNLYLFFNMIDSKRISEFRNELVKYKQFTKKRLDEEKEFLGIKIELYETLIEFVILTREKLDTKKSEEIDAWLVDKLYVKDSNEYKEYEEILKLFVDEKILSSKEAPYYATDNKTPILLSNFEKTRKYGTQSFLSEIQSNYKYSKVEKENIEDYNKKEEIEQKKKSNIEKLQDLKVELHKKWEQNKITEKEIEKYNNTTRKINEYNYLKNKEELQNVYLLHEMLSDLLARNVAFFNKWERDFKFIVIAIKQFLRENDKEKVNEFLNPPDNSKGKKVYFSVSKYKNTVENIDGIHKNFMNLIFLNNKFMNRKIDKMNCAIWVYFRNYIAHFLHLHTKNEKISLISQMNLLIKLFSYDKKVQNHILKSTKTLLEKYNIQINFEISNDKNEVFKYKIKNRLYSKKGKMLGKNNKFEILENEFLENVKAMLEYSE</sequence>
<evidence type="ECO:0000250" key="1">
    <source>
        <dbReference type="UniProtKB" id="C7NBY4"/>
    </source>
</evidence>
<evidence type="ECO:0000255" key="2"/>
<evidence type="ECO:0000269" key="3">
    <source>
    </source>
</evidence>
<evidence type="ECO:0000269" key="4">
    <source>
    </source>
</evidence>
<evidence type="ECO:0000303" key="5">
    <source>
    </source>
</evidence>
<evidence type="ECO:0000305" key="6"/>
<evidence type="ECO:0000305" key="7">
    <source>
    </source>
</evidence>
<keyword id="KW-0051">Antiviral defense</keyword>
<keyword id="KW-0175">Coiled coil</keyword>
<keyword id="KW-0255">Endonuclease</keyword>
<keyword id="KW-0378">Hydrolase</keyword>
<keyword id="KW-0540">Nuclease</keyword>
<keyword id="KW-0677">Repeat</keyword>
<keyword id="KW-0694">RNA-binding</keyword>
<accession>U2PSH1</accession>